<reference key="1">
    <citation type="journal article" date="2003" name="Lancet">
        <title>Genome sequence of Vibrio parahaemolyticus: a pathogenic mechanism distinct from that of V. cholerae.</title>
        <authorList>
            <person name="Makino K."/>
            <person name="Oshima K."/>
            <person name="Kurokawa K."/>
            <person name="Yokoyama K."/>
            <person name="Uda T."/>
            <person name="Tagomori K."/>
            <person name="Iijima Y."/>
            <person name="Najima M."/>
            <person name="Nakano M."/>
            <person name="Yamashita A."/>
            <person name="Kubota Y."/>
            <person name="Kimura S."/>
            <person name="Yasunaga T."/>
            <person name="Honda T."/>
            <person name="Shinagawa H."/>
            <person name="Hattori M."/>
            <person name="Iida T."/>
        </authorList>
    </citation>
    <scope>NUCLEOTIDE SEQUENCE [LARGE SCALE GENOMIC DNA]</scope>
    <source>
        <strain>RIMD 2210633</strain>
    </source>
</reference>
<feature type="chain" id="PRO_0000205023" description="DNA repair protein RecO">
    <location>
        <begin position="1"/>
        <end position="243"/>
    </location>
</feature>
<evidence type="ECO:0000255" key="1">
    <source>
        <dbReference type="HAMAP-Rule" id="MF_00201"/>
    </source>
</evidence>
<dbReference type="EMBL" id="BA000031">
    <property type="protein sequence ID" value="BAC60833.1"/>
    <property type="molecule type" value="Genomic_DNA"/>
</dbReference>
<dbReference type="RefSeq" id="NP_798949.1">
    <property type="nucleotide sequence ID" value="NC_004603.1"/>
</dbReference>
<dbReference type="RefSeq" id="WP_005482573.1">
    <property type="nucleotide sequence ID" value="NC_004603.1"/>
</dbReference>
<dbReference type="SMR" id="Q87LP1"/>
<dbReference type="GeneID" id="1190094"/>
<dbReference type="KEGG" id="vpa:VP2570"/>
<dbReference type="PATRIC" id="fig|223926.6.peg.2468"/>
<dbReference type="eggNOG" id="COG1381">
    <property type="taxonomic scope" value="Bacteria"/>
</dbReference>
<dbReference type="HOGENOM" id="CLU_066645_1_0_6"/>
<dbReference type="Proteomes" id="UP000002493">
    <property type="component" value="Chromosome 1"/>
</dbReference>
<dbReference type="GO" id="GO:0043590">
    <property type="term" value="C:bacterial nucleoid"/>
    <property type="evidence" value="ECO:0007669"/>
    <property type="project" value="TreeGrafter"/>
</dbReference>
<dbReference type="GO" id="GO:0006310">
    <property type="term" value="P:DNA recombination"/>
    <property type="evidence" value="ECO:0007669"/>
    <property type="project" value="UniProtKB-UniRule"/>
</dbReference>
<dbReference type="GO" id="GO:0006302">
    <property type="term" value="P:double-strand break repair"/>
    <property type="evidence" value="ECO:0007669"/>
    <property type="project" value="TreeGrafter"/>
</dbReference>
<dbReference type="Gene3D" id="2.40.50.140">
    <property type="entry name" value="Nucleic acid-binding proteins"/>
    <property type="match status" value="1"/>
</dbReference>
<dbReference type="Gene3D" id="1.20.1440.120">
    <property type="entry name" value="Recombination protein O, C-terminal domain"/>
    <property type="match status" value="1"/>
</dbReference>
<dbReference type="HAMAP" id="MF_00201">
    <property type="entry name" value="RecO"/>
    <property type="match status" value="1"/>
</dbReference>
<dbReference type="InterPro" id="IPR037278">
    <property type="entry name" value="ARFGAP/RecO"/>
</dbReference>
<dbReference type="InterPro" id="IPR022572">
    <property type="entry name" value="DNA_rep/recomb_RecO_N"/>
</dbReference>
<dbReference type="InterPro" id="IPR012340">
    <property type="entry name" value="NA-bd_OB-fold"/>
</dbReference>
<dbReference type="InterPro" id="IPR003717">
    <property type="entry name" value="RecO"/>
</dbReference>
<dbReference type="InterPro" id="IPR042242">
    <property type="entry name" value="RecO_C"/>
</dbReference>
<dbReference type="NCBIfam" id="TIGR00613">
    <property type="entry name" value="reco"/>
    <property type="match status" value="1"/>
</dbReference>
<dbReference type="PANTHER" id="PTHR33991">
    <property type="entry name" value="DNA REPAIR PROTEIN RECO"/>
    <property type="match status" value="1"/>
</dbReference>
<dbReference type="PANTHER" id="PTHR33991:SF1">
    <property type="entry name" value="DNA REPAIR PROTEIN RECO"/>
    <property type="match status" value="1"/>
</dbReference>
<dbReference type="Pfam" id="PF02565">
    <property type="entry name" value="RecO_C"/>
    <property type="match status" value="1"/>
</dbReference>
<dbReference type="Pfam" id="PF11967">
    <property type="entry name" value="RecO_N"/>
    <property type="match status" value="1"/>
</dbReference>
<dbReference type="SUPFAM" id="SSF57863">
    <property type="entry name" value="ArfGap/RecO-like zinc finger"/>
    <property type="match status" value="1"/>
</dbReference>
<dbReference type="SUPFAM" id="SSF50249">
    <property type="entry name" value="Nucleic acid-binding proteins"/>
    <property type="match status" value="1"/>
</dbReference>
<accession>Q87LP1</accession>
<keyword id="KW-0227">DNA damage</keyword>
<keyword id="KW-0233">DNA recombination</keyword>
<keyword id="KW-0234">DNA repair</keyword>
<sequence length="243" mass="27450">MSNLSAEGFQRCFVLHRRPYSESSLILDVFSEEYGRITLMAKGARSKRSNLKGALQPFTPLLLKWSGKGSMKTLRQAEPISLGLPLFGINLYSAMYVNELVGRVLMAEVPMPALFHDYLHALTELAQCENPEPALRRFELALLSSMGYGVDFLHCAGTGEPVDPEMTYRYREQKGFIASVRRDNLTFLGNELIAISERRFVTKEQLKAAKRFTRIALKPYLGGKPLKSRELFIQTPRARSNGK</sequence>
<name>RECO_VIBPA</name>
<organism>
    <name type="scientific">Vibrio parahaemolyticus serotype O3:K6 (strain RIMD 2210633)</name>
    <dbReference type="NCBI Taxonomy" id="223926"/>
    <lineage>
        <taxon>Bacteria</taxon>
        <taxon>Pseudomonadati</taxon>
        <taxon>Pseudomonadota</taxon>
        <taxon>Gammaproteobacteria</taxon>
        <taxon>Vibrionales</taxon>
        <taxon>Vibrionaceae</taxon>
        <taxon>Vibrio</taxon>
    </lineage>
</organism>
<proteinExistence type="inferred from homology"/>
<gene>
    <name evidence="1" type="primary">recO</name>
    <name type="ordered locus">VP2570</name>
</gene>
<comment type="function">
    <text evidence="1">Involved in DNA repair and RecF pathway recombination.</text>
</comment>
<comment type="similarity">
    <text evidence="1">Belongs to the RecO family.</text>
</comment>
<protein>
    <recommendedName>
        <fullName evidence="1">DNA repair protein RecO</fullName>
    </recommendedName>
    <alternativeName>
        <fullName evidence="1">Recombination protein O</fullName>
    </alternativeName>
</protein>